<reference key="1">
    <citation type="journal article" date="1999" name="Infect. Immun.">
        <title>Molecular cloning and characterization of rat genes encoding homologues of human beta-defensins.</title>
        <authorList>
            <person name="Jia H.P."/>
            <person name="Mills J.N."/>
            <person name="Barahmand-Pour F."/>
            <person name="Nishimura D."/>
            <person name="Mallampali R.K."/>
            <person name="Wang G."/>
            <person name="Wiles K."/>
            <person name="Tack B.F."/>
            <person name="Bevins C.L."/>
            <person name="McCray P.B. Jr."/>
        </authorList>
    </citation>
    <scope>NUCLEOTIDE SEQUENCE [MRNA]</scope>
    <source>
        <strain>Wistar</strain>
    </source>
</reference>
<reference key="2">
    <citation type="journal article" date="2005" name="Physiol. Genomics">
        <title>Cross-species analysis of the mammalian beta-defensin gene family: presence of syntenic gene clusters and preferential expression in the male reproductive tract.</title>
        <authorList>
            <person name="Patil A.A."/>
            <person name="Cai Y."/>
            <person name="Sang Y."/>
            <person name="Blecha F."/>
            <person name="Zhang G."/>
        </authorList>
    </citation>
    <scope>NUCLEOTIDE SEQUENCE [MRNA]</scope>
</reference>
<organism>
    <name type="scientific">Rattus norvegicus</name>
    <name type="common">Rat</name>
    <dbReference type="NCBI Taxonomy" id="10116"/>
    <lineage>
        <taxon>Eukaryota</taxon>
        <taxon>Metazoa</taxon>
        <taxon>Chordata</taxon>
        <taxon>Craniata</taxon>
        <taxon>Vertebrata</taxon>
        <taxon>Euteleostomi</taxon>
        <taxon>Mammalia</taxon>
        <taxon>Eutheria</taxon>
        <taxon>Euarchontoglires</taxon>
        <taxon>Glires</taxon>
        <taxon>Rodentia</taxon>
        <taxon>Myomorpha</taxon>
        <taxon>Muroidea</taxon>
        <taxon>Muridae</taxon>
        <taxon>Murinae</taxon>
        <taxon>Rattus</taxon>
    </lineage>
</organism>
<evidence type="ECO:0000250" key="1"/>
<evidence type="ECO:0000250" key="2">
    <source>
        <dbReference type="UniProtKB" id="P46162"/>
    </source>
</evidence>
<evidence type="ECO:0000250" key="3">
    <source>
        <dbReference type="UniProtKB" id="P82019"/>
    </source>
</evidence>
<evidence type="ECO:0000255" key="4"/>
<evidence type="ECO:0000305" key="5"/>
<gene>
    <name type="primary">Defb4</name>
    <name type="synonym">Defb2</name>
    <name type="synonym">Defb3</name>
</gene>
<sequence length="63" mass="6946">MRIHYLLFSFLLVLLSPLSAFTQSINNPITCLTKGGVCWGPCTGGFRQIGTCGLPRVRCCKKK</sequence>
<feature type="signal peptide" evidence="4">
    <location>
        <begin position="1"/>
        <end position="22"/>
    </location>
</feature>
<feature type="peptide" id="PRO_0000006962" description="Beta-defensin 4">
    <location>
        <begin position="23"/>
        <end position="63"/>
    </location>
</feature>
<feature type="modified residue" description="Pyrrolidone carboxylic acid" evidence="2">
    <location>
        <position position="23"/>
    </location>
</feature>
<feature type="disulfide bond" evidence="1">
    <location>
        <begin position="31"/>
        <end position="59"/>
    </location>
</feature>
<feature type="disulfide bond" evidence="1">
    <location>
        <begin position="38"/>
        <end position="52"/>
    </location>
</feature>
<feature type="disulfide bond" evidence="1">
    <location>
        <begin position="42"/>
        <end position="60"/>
    </location>
</feature>
<dbReference type="EMBL" id="AF068861">
    <property type="protein sequence ID" value="AAC28072.1"/>
    <property type="molecule type" value="mRNA"/>
</dbReference>
<dbReference type="EMBL" id="AY621374">
    <property type="protein sequence ID" value="AAT51913.1"/>
    <property type="molecule type" value="mRNA"/>
</dbReference>
<dbReference type="RefSeq" id="NP_071989.1">
    <property type="nucleotide sequence ID" value="NM_022544.2"/>
</dbReference>
<dbReference type="SMR" id="O88514"/>
<dbReference type="FunCoup" id="O88514">
    <property type="interactions" value="163"/>
</dbReference>
<dbReference type="STRING" id="10116.ENSRNOP00000054838"/>
<dbReference type="PaxDb" id="10116-ENSRNOP00000054838"/>
<dbReference type="Ensembl" id="ENSRNOT00000058029.2">
    <property type="protein sequence ID" value="ENSRNOP00000054838.1"/>
    <property type="gene ID" value="ENSRNOG00000013939.4"/>
</dbReference>
<dbReference type="GeneID" id="64389"/>
<dbReference type="KEGG" id="rno:64389"/>
<dbReference type="UCSC" id="RGD:619944">
    <property type="organism name" value="rat"/>
</dbReference>
<dbReference type="AGR" id="RGD:619944"/>
<dbReference type="CTD" id="56519"/>
<dbReference type="RGD" id="619944">
    <property type="gene designation" value="Defb4"/>
</dbReference>
<dbReference type="eggNOG" id="ENOG502SYUI">
    <property type="taxonomic scope" value="Eukaryota"/>
</dbReference>
<dbReference type="GeneTree" id="ENSGT00940000160995"/>
<dbReference type="HOGENOM" id="CLU_189296_4_1_1"/>
<dbReference type="InParanoid" id="O88514"/>
<dbReference type="OMA" id="PGTKCCR"/>
<dbReference type="OrthoDB" id="9623680at2759"/>
<dbReference type="PhylomeDB" id="O88514"/>
<dbReference type="Reactome" id="R-RNO-1461957">
    <property type="pathway name" value="Beta defensins"/>
</dbReference>
<dbReference type="Reactome" id="R-RNO-1461973">
    <property type="pathway name" value="Defensins"/>
</dbReference>
<dbReference type="PRO" id="PR:O88514"/>
<dbReference type="Proteomes" id="UP000002494">
    <property type="component" value="Chromosome 16"/>
</dbReference>
<dbReference type="Bgee" id="ENSRNOG00000013939">
    <property type="expression patterns" value="Expressed in lung and 13 other cell types or tissues"/>
</dbReference>
<dbReference type="GO" id="GO:0005615">
    <property type="term" value="C:extracellular space"/>
    <property type="evidence" value="ECO:0000266"/>
    <property type="project" value="RGD"/>
</dbReference>
<dbReference type="GO" id="GO:0031731">
    <property type="term" value="F:CCR6 chemokine receptor binding"/>
    <property type="evidence" value="ECO:0000250"/>
    <property type="project" value="UniProtKB"/>
</dbReference>
<dbReference type="GO" id="GO:0042056">
    <property type="term" value="F:chemoattractant activity"/>
    <property type="evidence" value="ECO:0000318"/>
    <property type="project" value="GO_Central"/>
</dbReference>
<dbReference type="GO" id="GO:0005546">
    <property type="term" value="F:phosphatidylinositol-4,5-bisphosphate binding"/>
    <property type="evidence" value="ECO:0000266"/>
    <property type="project" value="RGD"/>
</dbReference>
<dbReference type="GO" id="GO:0061760">
    <property type="term" value="P:antifungal innate immune response"/>
    <property type="evidence" value="ECO:0000266"/>
    <property type="project" value="RGD"/>
</dbReference>
<dbReference type="GO" id="GO:0061844">
    <property type="term" value="P:antimicrobial humoral immune response mediated by antimicrobial peptide"/>
    <property type="evidence" value="ECO:0000266"/>
    <property type="project" value="RGD"/>
</dbReference>
<dbReference type="GO" id="GO:0060326">
    <property type="term" value="P:cell chemotaxis"/>
    <property type="evidence" value="ECO:0000318"/>
    <property type="project" value="GO_Central"/>
</dbReference>
<dbReference type="GO" id="GO:0006935">
    <property type="term" value="P:chemotaxis"/>
    <property type="evidence" value="ECO:0000250"/>
    <property type="project" value="UniProtKB"/>
</dbReference>
<dbReference type="GO" id="GO:0042742">
    <property type="term" value="P:defense response to bacterium"/>
    <property type="evidence" value="ECO:0000266"/>
    <property type="project" value="RGD"/>
</dbReference>
<dbReference type="GO" id="GO:0050832">
    <property type="term" value="P:defense response to fungus"/>
    <property type="evidence" value="ECO:0000266"/>
    <property type="project" value="RGD"/>
</dbReference>
<dbReference type="GO" id="GO:0050829">
    <property type="term" value="P:defense response to Gram-negative bacterium"/>
    <property type="evidence" value="ECO:0000250"/>
    <property type="project" value="UniProtKB"/>
</dbReference>
<dbReference type="GO" id="GO:0050830">
    <property type="term" value="P:defense response to Gram-positive bacterium"/>
    <property type="evidence" value="ECO:0000250"/>
    <property type="project" value="UniProtKB"/>
</dbReference>
<dbReference type="FunFam" id="3.10.360.10:FF:000001">
    <property type="entry name" value="Beta-defensin 1"/>
    <property type="match status" value="1"/>
</dbReference>
<dbReference type="Gene3D" id="3.10.360.10">
    <property type="entry name" value="Antimicrobial Peptide, Beta-defensin 2, Chain A"/>
    <property type="match status" value="1"/>
</dbReference>
<dbReference type="InterPro" id="IPR001855">
    <property type="entry name" value="Defensin_beta-like"/>
</dbReference>
<dbReference type="PANTHER" id="PTHR20515">
    <property type="entry name" value="BETA-DEFENSIN"/>
    <property type="match status" value="1"/>
</dbReference>
<dbReference type="PANTHER" id="PTHR20515:SF2">
    <property type="entry name" value="DEFENSIN BETA 4A"/>
    <property type="match status" value="1"/>
</dbReference>
<dbReference type="Pfam" id="PF00711">
    <property type="entry name" value="Defensin_beta"/>
    <property type="match status" value="1"/>
</dbReference>
<dbReference type="SUPFAM" id="SSF57392">
    <property type="entry name" value="Defensin-like"/>
    <property type="match status" value="1"/>
</dbReference>
<proteinExistence type="evidence at transcript level"/>
<comment type="function">
    <text evidence="3">Exhibits antimicrobial activity against Gram-negative bacteria and Gram-positive bacteria. May act as a ligand for C-C chemokine receptor CCR6. Binds to CCR6 and induces chemotactic activity of CCR6-expressing cells.</text>
</comment>
<comment type="subcellular location">
    <subcellularLocation>
        <location evidence="1">Secreted</location>
    </subcellularLocation>
</comment>
<comment type="tissue specificity">
    <text>Highly expressed in lung.</text>
</comment>
<comment type="similarity">
    <text evidence="5">Belongs to the beta-defensin family.</text>
</comment>
<accession>O88514</accession>
<accession>Q32ZE9</accession>
<name>DEFB4_RAT</name>
<protein>
    <recommendedName>
        <fullName>Beta-defensin 4</fullName>
        <shortName>BD-4</shortName>
    </recommendedName>
    <alternativeName>
        <fullName>BD-2</fullName>
    </alternativeName>
    <alternativeName>
        <fullName>Defensin, beta 4</fullName>
    </alternativeName>
    <alternativeName>
        <fullName>RBD-2</fullName>
    </alternativeName>
    <alternativeName>
        <fullName>RBD-4</fullName>
    </alternativeName>
</protein>
<keyword id="KW-0044">Antibiotic</keyword>
<keyword id="KW-0929">Antimicrobial</keyword>
<keyword id="KW-0211">Defensin</keyword>
<keyword id="KW-1015">Disulfide bond</keyword>
<keyword id="KW-0873">Pyrrolidone carboxylic acid</keyword>
<keyword id="KW-1185">Reference proteome</keyword>
<keyword id="KW-0964">Secreted</keyword>
<keyword id="KW-0732">Signal</keyword>